<name>SDF2A_DROYA</name>
<feature type="chain" id="PRO_0000383182" description="Succinate dehydrogenase assembly factor 2-A, mitochondrial">
    <location>
        <begin position="1"/>
        <end position="162"/>
    </location>
</feature>
<gene>
    <name type="ORF">GE23226</name>
</gene>
<organism>
    <name type="scientific">Drosophila yakuba</name>
    <name type="common">Fruit fly</name>
    <dbReference type="NCBI Taxonomy" id="7245"/>
    <lineage>
        <taxon>Eukaryota</taxon>
        <taxon>Metazoa</taxon>
        <taxon>Ecdysozoa</taxon>
        <taxon>Arthropoda</taxon>
        <taxon>Hexapoda</taxon>
        <taxon>Insecta</taxon>
        <taxon>Pterygota</taxon>
        <taxon>Neoptera</taxon>
        <taxon>Endopterygota</taxon>
        <taxon>Diptera</taxon>
        <taxon>Brachycera</taxon>
        <taxon>Muscomorpha</taxon>
        <taxon>Ephydroidea</taxon>
        <taxon>Drosophilidae</taxon>
        <taxon>Drosophila</taxon>
        <taxon>Sophophora</taxon>
    </lineage>
</organism>
<sequence>MLRQLRLTMDILGWIFLPWRRSISNIKDSPPPPPLASTFDDVIVDYEDPDYLPLPEYPVRPNEPLETRKQRLLYQSRKRGMLENDLLLSTFAAKHLQNFSAEQTAQYDQLINGVSNDWDIYYWATDVKPTPKEYDTEIMRLLKKHVKNAEGVTRLRQPDLNT</sequence>
<keyword id="KW-0143">Chaperone</keyword>
<keyword id="KW-0496">Mitochondrion</keyword>
<dbReference type="EMBL" id="CM000157">
    <property type="protein sequence ID" value="EDW89309.1"/>
    <property type="molecule type" value="Genomic_DNA"/>
</dbReference>
<dbReference type="SMR" id="B4P2P8"/>
<dbReference type="EnsemblMetazoa" id="FBtr0269744">
    <property type="protein sequence ID" value="FBpp0268236"/>
    <property type="gene ID" value="FBgn0240425"/>
</dbReference>
<dbReference type="EnsemblMetazoa" id="XM_002089561.4">
    <property type="protein sequence ID" value="XP_002089597.1"/>
    <property type="gene ID" value="LOC6528553"/>
</dbReference>
<dbReference type="GeneID" id="6528553"/>
<dbReference type="KEGG" id="dya:Dyak_GE23226"/>
<dbReference type="eggNOG" id="KOG3326">
    <property type="taxonomic scope" value="Eukaryota"/>
</dbReference>
<dbReference type="HOGENOM" id="CLU_103054_0_3_1"/>
<dbReference type="OMA" id="YGKPQNP"/>
<dbReference type="OrthoDB" id="284292at2759"/>
<dbReference type="PhylomeDB" id="B4P2P8"/>
<dbReference type="Proteomes" id="UP000002282">
    <property type="component" value="Chromosome 2L"/>
</dbReference>
<dbReference type="GO" id="GO:0005759">
    <property type="term" value="C:mitochondrial matrix"/>
    <property type="evidence" value="ECO:0007669"/>
    <property type="project" value="UniProtKB-SubCell"/>
</dbReference>
<dbReference type="GO" id="GO:0005739">
    <property type="term" value="C:mitochondrion"/>
    <property type="evidence" value="ECO:0000250"/>
    <property type="project" value="UniProtKB"/>
</dbReference>
<dbReference type="GO" id="GO:0006121">
    <property type="term" value="P:mitochondrial electron transport, succinate to ubiquinone"/>
    <property type="evidence" value="ECO:0000250"/>
    <property type="project" value="UniProtKB"/>
</dbReference>
<dbReference type="GO" id="GO:0034553">
    <property type="term" value="P:mitochondrial respiratory chain complex II assembly"/>
    <property type="evidence" value="ECO:0007669"/>
    <property type="project" value="TreeGrafter"/>
</dbReference>
<dbReference type="GO" id="GO:0018293">
    <property type="term" value="P:protein-FAD linkage"/>
    <property type="evidence" value="ECO:0000250"/>
    <property type="project" value="UniProtKB"/>
</dbReference>
<dbReference type="GO" id="GO:0006099">
    <property type="term" value="P:tricarboxylic acid cycle"/>
    <property type="evidence" value="ECO:0007669"/>
    <property type="project" value="TreeGrafter"/>
</dbReference>
<dbReference type="FunFam" id="1.10.150.250:FF:000002">
    <property type="entry name" value="Succinate dehydrogenase assembly factor 2, mitochondrial"/>
    <property type="match status" value="1"/>
</dbReference>
<dbReference type="Gene3D" id="1.10.150.250">
    <property type="entry name" value="Flavinator of succinate dehydrogenase"/>
    <property type="match status" value="1"/>
</dbReference>
<dbReference type="HAMAP" id="MF_03057">
    <property type="entry name" value="SDHAF2"/>
    <property type="match status" value="1"/>
</dbReference>
<dbReference type="InterPro" id="IPR005631">
    <property type="entry name" value="SDH"/>
</dbReference>
<dbReference type="InterPro" id="IPR036714">
    <property type="entry name" value="SDH_sf"/>
</dbReference>
<dbReference type="InterPro" id="IPR028882">
    <property type="entry name" value="SDHAF2"/>
</dbReference>
<dbReference type="PANTHER" id="PTHR12469">
    <property type="entry name" value="PROTEIN EMI5 HOMOLOG, MITOCHONDRIAL"/>
    <property type="match status" value="1"/>
</dbReference>
<dbReference type="PANTHER" id="PTHR12469:SF2">
    <property type="entry name" value="SUCCINATE DEHYDROGENASE ASSEMBLY FACTOR 2, MITOCHONDRIAL"/>
    <property type="match status" value="1"/>
</dbReference>
<dbReference type="Pfam" id="PF03937">
    <property type="entry name" value="Sdh5"/>
    <property type="match status" value="1"/>
</dbReference>
<dbReference type="SUPFAM" id="SSF109910">
    <property type="entry name" value="YgfY-like"/>
    <property type="match status" value="1"/>
</dbReference>
<reference key="1">
    <citation type="journal article" date="2007" name="Nature">
        <title>Evolution of genes and genomes on the Drosophila phylogeny.</title>
        <authorList>
            <consortium name="Drosophila 12 genomes consortium"/>
        </authorList>
    </citation>
    <scope>NUCLEOTIDE SEQUENCE [LARGE SCALE GENOMIC DNA]</scope>
    <source>
        <strain>Tai18E2 / Tucson 14021-0261.01</strain>
    </source>
</reference>
<protein>
    <recommendedName>
        <fullName evidence="1">Succinate dehydrogenase assembly factor 2-A, mitochondrial</fullName>
        <shortName evidence="1">SDH assembly factor 2-A</shortName>
        <shortName evidence="1">SDHAF2-A</shortName>
    </recommendedName>
</protein>
<proteinExistence type="inferred from homology"/>
<evidence type="ECO:0000255" key="1">
    <source>
        <dbReference type="HAMAP-Rule" id="MF_03057"/>
    </source>
</evidence>
<accession>B4P2P8</accession>
<comment type="function">
    <text evidence="1">Plays an essential role in the assembly of succinate dehydrogenase (SDH), an enzyme complex (also referred to as respiratory complex II) that is a component of both the tricarboxylic acid (TCA) cycle and the mitochondrial electron transport chain, and which couples the oxidation of succinate to fumarate with the reduction of ubiquinone (coenzyme Q) to ubiquinol. Required for flavinylation (covalent attachment of FAD) of the flavoprotein subunit of the SDH catalytic dimer.</text>
</comment>
<comment type="subunit">
    <text evidence="1">Interacts with the flavoprotein subunit within the SDH catalytic dimer.</text>
</comment>
<comment type="subcellular location">
    <subcellularLocation>
        <location evidence="1">Mitochondrion matrix</location>
    </subcellularLocation>
</comment>
<comment type="miscellaneous">
    <text evidence="1">This protein may be expected to contain an N-terminal transit peptide but none has been predicted.</text>
</comment>
<comment type="similarity">
    <text evidence="1">Belongs to the SDHAF2 family.</text>
</comment>